<protein>
    <recommendedName>
        <fullName evidence="1">Integration host factor subunit alpha</fullName>
        <shortName evidence="1">IHF-alpha</shortName>
    </recommendedName>
</protein>
<gene>
    <name evidence="1" type="primary">ihfA</name>
    <name evidence="1" type="synonym">himA</name>
    <name type="ordered locus">ABO_1836</name>
</gene>
<evidence type="ECO:0000255" key="1">
    <source>
        <dbReference type="HAMAP-Rule" id="MF_00380"/>
    </source>
</evidence>
<sequence length="100" mass="11440">MGALTKADMAERLFEELGLNKREAKEMVEMFFEEIRHSLEDNIPVKLSGFGNFDLRDKSERPGRNPKTGEEIPITARRVVTFRPGQKLKQRVEAYAGTKS</sequence>
<comment type="function">
    <text evidence="1">This protein is one of the two subunits of integration host factor, a specific DNA-binding protein that functions in genetic recombination as well as in transcriptional and translational control.</text>
</comment>
<comment type="subunit">
    <text evidence="1">Heterodimer of an alpha and a beta chain.</text>
</comment>
<comment type="similarity">
    <text evidence="1">Belongs to the bacterial histone-like protein family.</text>
</comment>
<proteinExistence type="inferred from homology"/>
<organism>
    <name type="scientific">Alcanivorax borkumensis (strain ATCC 700651 / DSM 11573 / NCIMB 13689 / SK2)</name>
    <dbReference type="NCBI Taxonomy" id="393595"/>
    <lineage>
        <taxon>Bacteria</taxon>
        <taxon>Pseudomonadati</taxon>
        <taxon>Pseudomonadota</taxon>
        <taxon>Gammaproteobacteria</taxon>
        <taxon>Oceanospirillales</taxon>
        <taxon>Alcanivoracaceae</taxon>
        <taxon>Alcanivorax</taxon>
    </lineage>
</organism>
<dbReference type="EMBL" id="AM286690">
    <property type="protein sequence ID" value="CAL17284.1"/>
    <property type="molecule type" value="Genomic_DNA"/>
</dbReference>
<dbReference type="RefSeq" id="WP_011589117.1">
    <property type="nucleotide sequence ID" value="NC_008260.1"/>
</dbReference>
<dbReference type="SMR" id="Q0VNG4"/>
<dbReference type="STRING" id="393595.ABO_1836"/>
<dbReference type="KEGG" id="abo:ABO_1836"/>
<dbReference type="eggNOG" id="COG0776">
    <property type="taxonomic scope" value="Bacteria"/>
</dbReference>
<dbReference type="HOGENOM" id="CLU_105066_1_3_6"/>
<dbReference type="OrthoDB" id="9797747at2"/>
<dbReference type="Proteomes" id="UP000008871">
    <property type="component" value="Chromosome"/>
</dbReference>
<dbReference type="GO" id="GO:0005829">
    <property type="term" value="C:cytosol"/>
    <property type="evidence" value="ECO:0007669"/>
    <property type="project" value="TreeGrafter"/>
</dbReference>
<dbReference type="GO" id="GO:0003677">
    <property type="term" value="F:DNA binding"/>
    <property type="evidence" value="ECO:0007669"/>
    <property type="project" value="UniProtKB-UniRule"/>
</dbReference>
<dbReference type="GO" id="GO:0030527">
    <property type="term" value="F:structural constituent of chromatin"/>
    <property type="evidence" value="ECO:0007669"/>
    <property type="project" value="InterPro"/>
</dbReference>
<dbReference type="GO" id="GO:0006310">
    <property type="term" value="P:DNA recombination"/>
    <property type="evidence" value="ECO:0007669"/>
    <property type="project" value="UniProtKB-UniRule"/>
</dbReference>
<dbReference type="GO" id="GO:0009893">
    <property type="term" value="P:positive regulation of metabolic process"/>
    <property type="evidence" value="ECO:0007669"/>
    <property type="project" value="UniProtKB-ARBA"/>
</dbReference>
<dbReference type="GO" id="GO:0006355">
    <property type="term" value="P:regulation of DNA-templated transcription"/>
    <property type="evidence" value="ECO:0007669"/>
    <property type="project" value="UniProtKB-UniRule"/>
</dbReference>
<dbReference type="GO" id="GO:0006417">
    <property type="term" value="P:regulation of translation"/>
    <property type="evidence" value="ECO:0007669"/>
    <property type="project" value="UniProtKB-UniRule"/>
</dbReference>
<dbReference type="CDD" id="cd13835">
    <property type="entry name" value="IHF_A"/>
    <property type="match status" value="1"/>
</dbReference>
<dbReference type="FunFam" id="4.10.520.10:FF:000002">
    <property type="entry name" value="Integration host factor subunit alpha"/>
    <property type="match status" value="1"/>
</dbReference>
<dbReference type="Gene3D" id="4.10.520.10">
    <property type="entry name" value="IHF-like DNA-binding proteins"/>
    <property type="match status" value="1"/>
</dbReference>
<dbReference type="HAMAP" id="MF_00380">
    <property type="entry name" value="IHF_alpha"/>
    <property type="match status" value="1"/>
</dbReference>
<dbReference type="InterPro" id="IPR000119">
    <property type="entry name" value="Hist_DNA-bd"/>
</dbReference>
<dbReference type="InterPro" id="IPR020816">
    <property type="entry name" value="Histone-like_DNA-bd_CS"/>
</dbReference>
<dbReference type="InterPro" id="IPR010992">
    <property type="entry name" value="IHF-like_DNA-bd_dom_sf"/>
</dbReference>
<dbReference type="InterPro" id="IPR005684">
    <property type="entry name" value="IHF_alpha"/>
</dbReference>
<dbReference type="NCBIfam" id="TIGR00987">
    <property type="entry name" value="himA"/>
    <property type="match status" value="1"/>
</dbReference>
<dbReference type="NCBIfam" id="NF001401">
    <property type="entry name" value="PRK00285.1"/>
    <property type="match status" value="1"/>
</dbReference>
<dbReference type="PANTHER" id="PTHR33175">
    <property type="entry name" value="DNA-BINDING PROTEIN HU"/>
    <property type="match status" value="1"/>
</dbReference>
<dbReference type="PANTHER" id="PTHR33175:SF2">
    <property type="entry name" value="INTEGRATION HOST FACTOR SUBUNIT ALPHA"/>
    <property type="match status" value="1"/>
</dbReference>
<dbReference type="Pfam" id="PF00216">
    <property type="entry name" value="Bac_DNA_binding"/>
    <property type="match status" value="1"/>
</dbReference>
<dbReference type="PRINTS" id="PR01727">
    <property type="entry name" value="DNABINDINGHU"/>
</dbReference>
<dbReference type="SMART" id="SM00411">
    <property type="entry name" value="BHL"/>
    <property type="match status" value="1"/>
</dbReference>
<dbReference type="SUPFAM" id="SSF47729">
    <property type="entry name" value="IHF-like DNA-binding proteins"/>
    <property type="match status" value="1"/>
</dbReference>
<dbReference type="PROSITE" id="PS00045">
    <property type="entry name" value="HISTONE_LIKE"/>
    <property type="match status" value="1"/>
</dbReference>
<feature type="chain" id="PRO_0000277709" description="Integration host factor subunit alpha">
    <location>
        <begin position="1"/>
        <end position="100"/>
    </location>
</feature>
<accession>Q0VNG4</accession>
<keyword id="KW-0233">DNA recombination</keyword>
<keyword id="KW-0238">DNA-binding</keyword>
<keyword id="KW-1185">Reference proteome</keyword>
<keyword id="KW-0804">Transcription</keyword>
<keyword id="KW-0805">Transcription regulation</keyword>
<keyword id="KW-0810">Translation regulation</keyword>
<reference key="1">
    <citation type="journal article" date="2006" name="Nat. Biotechnol.">
        <title>Genome sequence of the ubiquitous hydrocarbon-degrading marine bacterium Alcanivorax borkumensis.</title>
        <authorList>
            <person name="Schneiker S."/>
            <person name="Martins dos Santos V.A.P."/>
            <person name="Bartels D."/>
            <person name="Bekel T."/>
            <person name="Brecht M."/>
            <person name="Buhrmester J."/>
            <person name="Chernikova T.N."/>
            <person name="Denaro R."/>
            <person name="Ferrer M."/>
            <person name="Gertler C."/>
            <person name="Goesmann A."/>
            <person name="Golyshina O.V."/>
            <person name="Kaminski F."/>
            <person name="Khachane A.N."/>
            <person name="Lang S."/>
            <person name="Linke B."/>
            <person name="McHardy A.C."/>
            <person name="Meyer F."/>
            <person name="Nechitaylo T."/>
            <person name="Puehler A."/>
            <person name="Regenhardt D."/>
            <person name="Rupp O."/>
            <person name="Sabirova J.S."/>
            <person name="Selbitschka W."/>
            <person name="Yakimov M.M."/>
            <person name="Timmis K.N."/>
            <person name="Vorhoelter F.-J."/>
            <person name="Weidner S."/>
            <person name="Kaiser O."/>
            <person name="Golyshin P.N."/>
        </authorList>
    </citation>
    <scope>NUCLEOTIDE SEQUENCE [LARGE SCALE GENOMIC DNA]</scope>
    <source>
        <strain>ATCC 700651 / DSM 11573 / NCIMB 13689 / SK2</strain>
    </source>
</reference>
<name>IHFA_ALCBS</name>